<dbReference type="EMBL" id="BA000022">
    <property type="protein sequence ID" value="BAA17341.1"/>
    <property type="molecule type" value="Genomic_DNA"/>
</dbReference>
<dbReference type="PIR" id="S77494">
    <property type="entry name" value="S77494"/>
</dbReference>
<dbReference type="SMR" id="P73312"/>
<dbReference type="FunCoup" id="P73312">
    <property type="interactions" value="353"/>
</dbReference>
<dbReference type="STRING" id="1148.gene:10498204"/>
<dbReference type="PaxDb" id="1148-1652419"/>
<dbReference type="EnsemblBacteria" id="BAA17341">
    <property type="protein sequence ID" value="BAA17341"/>
    <property type="gene ID" value="BAA17341"/>
</dbReference>
<dbReference type="KEGG" id="syn:ssl3436"/>
<dbReference type="eggNOG" id="COG0255">
    <property type="taxonomic scope" value="Bacteria"/>
</dbReference>
<dbReference type="InParanoid" id="P73312"/>
<dbReference type="PhylomeDB" id="P73312"/>
<dbReference type="Proteomes" id="UP000001425">
    <property type="component" value="Chromosome"/>
</dbReference>
<dbReference type="GO" id="GO:0022625">
    <property type="term" value="C:cytosolic large ribosomal subunit"/>
    <property type="evidence" value="ECO:0000318"/>
    <property type="project" value="GO_Central"/>
</dbReference>
<dbReference type="GO" id="GO:0003735">
    <property type="term" value="F:structural constituent of ribosome"/>
    <property type="evidence" value="ECO:0007669"/>
    <property type="project" value="InterPro"/>
</dbReference>
<dbReference type="GO" id="GO:0006412">
    <property type="term" value="P:translation"/>
    <property type="evidence" value="ECO:0007669"/>
    <property type="project" value="UniProtKB-UniRule"/>
</dbReference>
<dbReference type="CDD" id="cd00427">
    <property type="entry name" value="Ribosomal_L29_HIP"/>
    <property type="match status" value="1"/>
</dbReference>
<dbReference type="FunFam" id="1.10.287.310:FF:000005">
    <property type="entry name" value="50S ribosomal protein L29"/>
    <property type="match status" value="1"/>
</dbReference>
<dbReference type="Gene3D" id="1.10.287.310">
    <property type="match status" value="1"/>
</dbReference>
<dbReference type="HAMAP" id="MF_00374">
    <property type="entry name" value="Ribosomal_uL29"/>
    <property type="match status" value="1"/>
</dbReference>
<dbReference type="InterPro" id="IPR050063">
    <property type="entry name" value="Ribosomal_protein_uL29"/>
</dbReference>
<dbReference type="InterPro" id="IPR001854">
    <property type="entry name" value="Ribosomal_uL29"/>
</dbReference>
<dbReference type="InterPro" id="IPR018254">
    <property type="entry name" value="Ribosomal_uL29_CS"/>
</dbReference>
<dbReference type="InterPro" id="IPR036049">
    <property type="entry name" value="Ribosomal_uL29_sf"/>
</dbReference>
<dbReference type="NCBIfam" id="TIGR00012">
    <property type="entry name" value="L29"/>
    <property type="match status" value="1"/>
</dbReference>
<dbReference type="PANTHER" id="PTHR10916">
    <property type="entry name" value="60S RIBOSOMAL PROTEIN L35/50S RIBOSOMAL PROTEIN L29"/>
    <property type="match status" value="1"/>
</dbReference>
<dbReference type="PANTHER" id="PTHR10916:SF0">
    <property type="entry name" value="LARGE RIBOSOMAL SUBUNIT PROTEIN UL29C"/>
    <property type="match status" value="1"/>
</dbReference>
<dbReference type="Pfam" id="PF00831">
    <property type="entry name" value="Ribosomal_L29"/>
    <property type="match status" value="1"/>
</dbReference>
<dbReference type="SUPFAM" id="SSF46561">
    <property type="entry name" value="Ribosomal protein L29 (L29p)"/>
    <property type="match status" value="1"/>
</dbReference>
<dbReference type="PROSITE" id="PS00579">
    <property type="entry name" value="RIBOSOMAL_L29"/>
    <property type="match status" value="1"/>
</dbReference>
<feature type="chain" id="PRO_0000130480" description="Large ribosomal subunit protein uL29">
    <location>
        <begin position="1"/>
        <end position="73"/>
    </location>
</feature>
<comment type="similarity">
    <text evidence="1">Belongs to the universal ribosomal protein uL29 family.</text>
</comment>
<name>RL29_SYNY3</name>
<gene>
    <name type="primary">rpmC</name>
    <name type="synonym">rpl29</name>
    <name type="ordered locus">ssl3436</name>
</gene>
<sequence length="73" mass="8546">MALPNIADARKLGDEELATEILATKQRLFQLRFQQATRRPENPHEFKHARHRLAQLLTVERERQLENSPSEEA</sequence>
<accession>P73312</accession>
<proteinExistence type="inferred from homology"/>
<protein>
    <recommendedName>
        <fullName evidence="1">Large ribosomal subunit protein uL29</fullName>
    </recommendedName>
    <alternativeName>
        <fullName>50S ribosomal protein L29</fullName>
    </alternativeName>
</protein>
<reference key="1">
    <citation type="journal article" date="1996" name="DNA Res.">
        <title>Sequence analysis of the genome of the unicellular cyanobacterium Synechocystis sp. strain PCC6803. II. Sequence determination of the entire genome and assignment of potential protein-coding regions.</title>
        <authorList>
            <person name="Kaneko T."/>
            <person name="Sato S."/>
            <person name="Kotani H."/>
            <person name="Tanaka A."/>
            <person name="Asamizu E."/>
            <person name="Nakamura Y."/>
            <person name="Miyajima N."/>
            <person name="Hirosawa M."/>
            <person name="Sugiura M."/>
            <person name="Sasamoto S."/>
            <person name="Kimura T."/>
            <person name="Hosouchi T."/>
            <person name="Matsuno A."/>
            <person name="Muraki A."/>
            <person name="Nakazaki N."/>
            <person name="Naruo K."/>
            <person name="Okumura S."/>
            <person name="Shimpo S."/>
            <person name="Takeuchi C."/>
            <person name="Wada T."/>
            <person name="Watanabe A."/>
            <person name="Yamada M."/>
            <person name="Yasuda M."/>
            <person name="Tabata S."/>
        </authorList>
    </citation>
    <scope>NUCLEOTIDE SEQUENCE [LARGE SCALE GENOMIC DNA]</scope>
    <source>
        <strain>ATCC 27184 / PCC 6803 / Kazusa</strain>
    </source>
</reference>
<keyword id="KW-1185">Reference proteome</keyword>
<keyword id="KW-0687">Ribonucleoprotein</keyword>
<keyword id="KW-0689">Ribosomal protein</keyword>
<evidence type="ECO:0000305" key="1"/>
<organism>
    <name type="scientific">Synechocystis sp. (strain ATCC 27184 / PCC 6803 / Kazusa)</name>
    <dbReference type="NCBI Taxonomy" id="1111708"/>
    <lineage>
        <taxon>Bacteria</taxon>
        <taxon>Bacillati</taxon>
        <taxon>Cyanobacteriota</taxon>
        <taxon>Cyanophyceae</taxon>
        <taxon>Synechococcales</taxon>
        <taxon>Merismopediaceae</taxon>
        <taxon>Synechocystis</taxon>
    </lineage>
</organism>